<dbReference type="EC" id="1.4.4.2" evidence="1"/>
<dbReference type="EMBL" id="AM942759">
    <property type="protein sequence ID" value="CAR44064.1"/>
    <property type="molecule type" value="Genomic_DNA"/>
</dbReference>
<dbReference type="RefSeq" id="WP_004248527.1">
    <property type="nucleotide sequence ID" value="NC_010554.1"/>
</dbReference>
<dbReference type="SMR" id="B4F0N7"/>
<dbReference type="EnsemblBacteria" id="CAR44064">
    <property type="protein sequence ID" value="CAR44064"/>
    <property type="gene ID" value="PMI2019"/>
</dbReference>
<dbReference type="GeneID" id="6802088"/>
<dbReference type="KEGG" id="pmr:PMI2019"/>
<dbReference type="eggNOG" id="COG0403">
    <property type="taxonomic scope" value="Bacteria"/>
</dbReference>
<dbReference type="eggNOG" id="COG1003">
    <property type="taxonomic scope" value="Bacteria"/>
</dbReference>
<dbReference type="HOGENOM" id="CLU_004620_1_1_6"/>
<dbReference type="Proteomes" id="UP000008319">
    <property type="component" value="Chromosome"/>
</dbReference>
<dbReference type="GO" id="GO:0005829">
    <property type="term" value="C:cytosol"/>
    <property type="evidence" value="ECO:0007669"/>
    <property type="project" value="TreeGrafter"/>
</dbReference>
<dbReference type="GO" id="GO:0005960">
    <property type="term" value="C:glycine cleavage complex"/>
    <property type="evidence" value="ECO:0007669"/>
    <property type="project" value="TreeGrafter"/>
</dbReference>
<dbReference type="GO" id="GO:0016594">
    <property type="term" value="F:glycine binding"/>
    <property type="evidence" value="ECO:0007669"/>
    <property type="project" value="TreeGrafter"/>
</dbReference>
<dbReference type="GO" id="GO:0004375">
    <property type="term" value="F:glycine dehydrogenase (decarboxylating) activity"/>
    <property type="evidence" value="ECO:0007669"/>
    <property type="project" value="UniProtKB-EC"/>
</dbReference>
<dbReference type="GO" id="GO:0030170">
    <property type="term" value="F:pyridoxal phosphate binding"/>
    <property type="evidence" value="ECO:0007669"/>
    <property type="project" value="TreeGrafter"/>
</dbReference>
<dbReference type="GO" id="GO:0019464">
    <property type="term" value="P:glycine decarboxylation via glycine cleavage system"/>
    <property type="evidence" value="ECO:0007669"/>
    <property type="project" value="UniProtKB-UniRule"/>
</dbReference>
<dbReference type="CDD" id="cd00613">
    <property type="entry name" value="GDC-P"/>
    <property type="match status" value="2"/>
</dbReference>
<dbReference type="FunFam" id="3.40.640.10:FF:000005">
    <property type="entry name" value="Glycine dehydrogenase (decarboxylating), mitochondrial"/>
    <property type="match status" value="1"/>
</dbReference>
<dbReference type="FunFam" id="3.90.1150.10:FF:000007">
    <property type="entry name" value="Glycine dehydrogenase (decarboxylating), mitochondrial"/>
    <property type="match status" value="1"/>
</dbReference>
<dbReference type="FunFam" id="3.40.640.10:FF:000007">
    <property type="entry name" value="glycine dehydrogenase (Decarboxylating), mitochondrial"/>
    <property type="match status" value="1"/>
</dbReference>
<dbReference type="Gene3D" id="3.90.1150.10">
    <property type="entry name" value="Aspartate Aminotransferase, domain 1"/>
    <property type="match status" value="2"/>
</dbReference>
<dbReference type="Gene3D" id="3.40.640.10">
    <property type="entry name" value="Type I PLP-dependent aspartate aminotransferase-like (Major domain)"/>
    <property type="match status" value="2"/>
</dbReference>
<dbReference type="HAMAP" id="MF_00711">
    <property type="entry name" value="GcvP"/>
    <property type="match status" value="1"/>
</dbReference>
<dbReference type="InterPro" id="IPR003437">
    <property type="entry name" value="GcvP"/>
</dbReference>
<dbReference type="InterPro" id="IPR049316">
    <property type="entry name" value="GDC-P_C"/>
</dbReference>
<dbReference type="InterPro" id="IPR049315">
    <property type="entry name" value="GDC-P_N"/>
</dbReference>
<dbReference type="InterPro" id="IPR020581">
    <property type="entry name" value="GDC_P"/>
</dbReference>
<dbReference type="InterPro" id="IPR015424">
    <property type="entry name" value="PyrdxlP-dep_Trfase"/>
</dbReference>
<dbReference type="InterPro" id="IPR015421">
    <property type="entry name" value="PyrdxlP-dep_Trfase_major"/>
</dbReference>
<dbReference type="InterPro" id="IPR015422">
    <property type="entry name" value="PyrdxlP-dep_Trfase_small"/>
</dbReference>
<dbReference type="NCBIfam" id="TIGR00461">
    <property type="entry name" value="gcvP"/>
    <property type="match status" value="1"/>
</dbReference>
<dbReference type="NCBIfam" id="NF003346">
    <property type="entry name" value="PRK04366.1"/>
    <property type="match status" value="1"/>
</dbReference>
<dbReference type="PANTHER" id="PTHR11773:SF13">
    <property type="entry name" value="GLYCINE DEHYDROGENASE (DECARBOXYLATING)"/>
    <property type="match status" value="1"/>
</dbReference>
<dbReference type="PANTHER" id="PTHR11773">
    <property type="entry name" value="GLYCINE DEHYDROGENASE, DECARBOXYLATING"/>
    <property type="match status" value="1"/>
</dbReference>
<dbReference type="Pfam" id="PF21478">
    <property type="entry name" value="GcvP2_C"/>
    <property type="match status" value="1"/>
</dbReference>
<dbReference type="Pfam" id="PF02347">
    <property type="entry name" value="GDC-P"/>
    <property type="match status" value="2"/>
</dbReference>
<dbReference type="SUPFAM" id="SSF53383">
    <property type="entry name" value="PLP-dependent transferases"/>
    <property type="match status" value="2"/>
</dbReference>
<comment type="function">
    <text evidence="1">The glycine cleavage system catalyzes the degradation of glycine. The P protein binds the alpha-amino group of glycine through its pyridoxal phosphate cofactor; CO(2) is released and the remaining methylamine moiety is then transferred to the lipoamide cofactor of the H protein.</text>
</comment>
<comment type="catalytic activity">
    <reaction evidence="1">
        <text>N(6)-[(R)-lipoyl]-L-lysyl-[glycine-cleavage complex H protein] + glycine + H(+) = N(6)-[(R)-S(8)-aminomethyldihydrolipoyl]-L-lysyl-[glycine-cleavage complex H protein] + CO2</text>
        <dbReference type="Rhea" id="RHEA:24304"/>
        <dbReference type="Rhea" id="RHEA-COMP:10494"/>
        <dbReference type="Rhea" id="RHEA-COMP:10495"/>
        <dbReference type="ChEBI" id="CHEBI:15378"/>
        <dbReference type="ChEBI" id="CHEBI:16526"/>
        <dbReference type="ChEBI" id="CHEBI:57305"/>
        <dbReference type="ChEBI" id="CHEBI:83099"/>
        <dbReference type="ChEBI" id="CHEBI:83143"/>
        <dbReference type="EC" id="1.4.4.2"/>
    </reaction>
</comment>
<comment type="cofactor">
    <cofactor evidence="1">
        <name>pyridoxal 5'-phosphate</name>
        <dbReference type="ChEBI" id="CHEBI:597326"/>
    </cofactor>
</comment>
<comment type="subunit">
    <text evidence="1">The glycine cleavage system is composed of four proteins: P, T, L and H.</text>
</comment>
<comment type="similarity">
    <text evidence="1">Belongs to the GcvP family.</text>
</comment>
<reference key="1">
    <citation type="journal article" date="2008" name="J. Bacteriol.">
        <title>Complete genome sequence of uropathogenic Proteus mirabilis, a master of both adherence and motility.</title>
        <authorList>
            <person name="Pearson M.M."/>
            <person name="Sebaihia M."/>
            <person name="Churcher C."/>
            <person name="Quail M.A."/>
            <person name="Seshasayee A.S."/>
            <person name="Luscombe N.M."/>
            <person name="Abdellah Z."/>
            <person name="Arrosmith C."/>
            <person name="Atkin B."/>
            <person name="Chillingworth T."/>
            <person name="Hauser H."/>
            <person name="Jagels K."/>
            <person name="Moule S."/>
            <person name="Mungall K."/>
            <person name="Norbertczak H."/>
            <person name="Rabbinowitsch E."/>
            <person name="Walker D."/>
            <person name="Whithead S."/>
            <person name="Thomson N.R."/>
            <person name="Rather P.N."/>
            <person name="Parkhill J."/>
            <person name="Mobley H.L.T."/>
        </authorList>
    </citation>
    <scope>NUCLEOTIDE SEQUENCE [LARGE SCALE GENOMIC DNA]</scope>
    <source>
        <strain>HI4320</strain>
    </source>
</reference>
<proteinExistence type="inferred from homology"/>
<name>GCSP_PROMH</name>
<protein>
    <recommendedName>
        <fullName evidence="1">Glycine dehydrogenase (decarboxylating)</fullName>
        <ecNumber evidence="1">1.4.4.2</ecNumber>
    </recommendedName>
    <alternativeName>
        <fullName evidence="1">Glycine cleavage system P-protein</fullName>
    </alternativeName>
    <alternativeName>
        <fullName evidence="1">Glycine decarboxylase</fullName>
    </alternativeName>
    <alternativeName>
        <fullName evidence="1">Glycine dehydrogenase (aminomethyl-transferring)</fullName>
    </alternativeName>
</protein>
<gene>
    <name evidence="1" type="primary">gcvP</name>
    <name type="ordered locus">PMI2019</name>
</gene>
<sequence length="958" mass="105106">MTQTLTQLEYRDEFIRRHIGSSPEQIKEMLDVVGISSLNELTQKIVPDNIQLATPPNVGGGATEQEALAELKAIARKNKRFTSYIGMGYAPSVLPPVILRNLLENPGWYTAYTPYQPEVSQGRLESLLNFQQVTIDYTGMDLASASLLDEATAAAEAMAMAKRVSKLKNAERFFVADDIHPQTLDVVKTRANTFGFEVIVDKAEKVLELEGVFGVLLQQVGTTGEIHDYSQLISELKTRKIITSVAADLMALVLLTAPGQQGADIVLGSAQRFGVPMGYGGPHAAFFACRDEYKRAMPGRIIGVSRDAAGNRALRMAMQTREQHIRREKANSNICTSQVLLANIAAMYAVYHGPEGLKNIAQRIHRLTDILAAGLIQNGMTLRHQTWFDTLTVETADKAGVLQRAKDAEINLRTDIVGAVGVTLSEVTTREDVVRLIEIISGKAFSDDIDTLDALVASSSTSIPTAMLRKDAVLTHENFHLYHSETEMMRYMHRLENKDLALNQAMIPLGSCTMKLNAAAEMLPITWPEFTEMHPFCPPYQAQGYQIMIEQLSNWLAAITGYDAMCMQPNSGAQGEYAGLLAIRRYHQSRGEGNRHICLIPSSAHGTNPASAHMAGMTVVVVGCDENGNIDIADLKAKAEKHQAELSCVMVTYPSTHGVYEEGIREVCEIIHQYGGQVYLDGANMNAQVGITTPGFIGSDVSHLNLHKTFCIPHGGGGPGMGPIGVKAHLAPFVPGHSVVEMDGVTTQGAVSAAQFGSASILPISWMYIRMMGSEGLKQASQVAILNANYIAQRLKDDYDILYSGAEGYVAHECIIDIRPLKANYGISEMDVAKRLIDYGFHAPTMSFPVAGTLMIEPTESESKVEIDRFIDALLSIRAEIAQVDDGVWPIDDNPLVNAPHTQYELVQEWSHSYSRECAVFPSEATKRNKYWPAVKRLDDVYGDRHLHCSCAPISDYE</sequence>
<organism>
    <name type="scientific">Proteus mirabilis (strain HI4320)</name>
    <dbReference type="NCBI Taxonomy" id="529507"/>
    <lineage>
        <taxon>Bacteria</taxon>
        <taxon>Pseudomonadati</taxon>
        <taxon>Pseudomonadota</taxon>
        <taxon>Gammaproteobacteria</taxon>
        <taxon>Enterobacterales</taxon>
        <taxon>Morganellaceae</taxon>
        <taxon>Proteus</taxon>
    </lineage>
</organism>
<accession>B4F0N7</accession>
<keyword id="KW-0560">Oxidoreductase</keyword>
<keyword id="KW-0663">Pyridoxal phosphate</keyword>
<keyword id="KW-1185">Reference proteome</keyword>
<feature type="chain" id="PRO_1000132446" description="Glycine dehydrogenase (decarboxylating)">
    <location>
        <begin position="1"/>
        <end position="958"/>
    </location>
</feature>
<feature type="modified residue" description="N6-(pyridoxal phosphate)lysine" evidence="1">
    <location>
        <position position="708"/>
    </location>
</feature>
<evidence type="ECO:0000255" key="1">
    <source>
        <dbReference type="HAMAP-Rule" id="MF_00711"/>
    </source>
</evidence>